<dbReference type="EMBL" id="CP000891">
    <property type="protein sequence ID" value="ABX48325.1"/>
    <property type="molecule type" value="Genomic_DNA"/>
</dbReference>
<dbReference type="SMR" id="A9L4U0"/>
<dbReference type="KEGG" id="sbn:Sbal195_1149"/>
<dbReference type="HOGENOM" id="CLU_061989_0_0_6"/>
<dbReference type="Proteomes" id="UP000000770">
    <property type="component" value="Chromosome"/>
</dbReference>
<dbReference type="GO" id="GO:0005829">
    <property type="term" value="C:cytosol"/>
    <property type="evidence" value="ECO:0007669"/>
    <property type="project" value="TreeGrafter"/>
</dbReference>
<dbReference type="GO" id="GO:0033194">
    <property type="term" value="P:response to hydroperoxide"/>
    <property type="evidence" value="ECO:0007669"/>
    <property type="project" value="TreeGrafter"/>
</dbReference>
<dbReference type="HAMAP" id="MF_00652">
    <property type="entry name" value="UPF0246"/>
    <property type="match status" value="1"/>
</dbReference>
<dbReference type="InterPro" id="IPR005583">
    <property type="entry name" value="YaaA"/>
</dbReference>
<dbReference type="NCBIfam" id="NF002541">
    <property type="entry name" value="PRK02101.1-1"/>
    <property type="match status" value="1"/>
</dbReference>
<dbReference type="NCBIfam" id="NF002542">
    <property type="entry name" value="PRK02101.1-3"/>
    <property type="match status" value="1"/>
</dbReference>
<dbReference type="PANTHER" id="PTHR30283:SF4">
    <property type="entry name" value="PEROXIDE STRESS RESISTANCE PROTEIN YAAA"/>
    <property type="match status" value="1"/>
</dbReference>
<dbReference type="PANTHER" id="PTHR30283">
    <property type="entry name" value="PEROXIDE STRESS RESPONSE PROTEIN YAAA"/>
    <property type="match status" value="1"/>
</dbReference>
<dbReference type="Pfam" id="PF03883">
    <property type="entry name" value="H2O2_YaaD"/>
    <property type="match status" value="1"/>
</dbReference>
<name>Y1149_SHEB9</name>
<gene>
    <name type="ordered locus">Sbal195_1149</name>
</gene>
<comment type="similarity">
    <text evidence="1">Belongs to the UPF0246 family.</text>
</comment>
<reference key="1">
    <citation type="submission" date="2007-11" db="EMBL/GenBank/DDBJ databases">
        <title>Complete sequence of chromosome of Shewanella baltica OS195.</title>
        <authorList>
            <consortium name="US DOE Joint Genome Institute"/>
            <person name="Copeland A."/>
            <person name="Lucas S."/>
            <person name="Lapidus A."/>
            <person name="Barry K."/>
            <person name="Glavina del Rio T."/>
            <person name="Dalin E."/>
            <person name="Tice H."/>
            <person name="Pitluck S."/>
            <person name="Chain P."/>
            <person name="Malfatti S."/>
            <person name="Shin M."/>
            <person name="Vergez L."/>
            <person name="Schmutz J."/>
            <person name="Larimer F."/>
            <person name="Land M."/>
            <person name="Hauser L."/>
            <person name="Kyrpides N."/>
            <person name="Kim E."/>
            <person name="Brettar I."/>
            <person name="Rodrigues J."/>
            <person name="Konstantinidis K."/>
            <person name="Klappenbach J."/>
            <person name="Hofle M."/>
            <person name="Tiedje J."/>
            <person name="Richardson P."/>
        </authorList>
    </citation>
    <scope>NUCLEOTIDE SEQUENCE [LARGE SCALE GENOMIC DNA]</scope>
    <source>
        <strain>OS195</strain>
    </source>
</reference>
<organism>
    <name type="scientific">Shewanella baltica (strain OS195)</name>
    <dbReference type="NCBI Taxonomy" id="399599"/>
    <lineage>
        <taxon>Bacteria</taxon>
        <taxon>Pseudomonadati</taxon>
        <taxon>Pseudomonadota</taxon>
        <taxon>Gammaproteobacteria</taxon>
        <taxon>Alteromonadales</taxon>
        <taxon>Shewanellaceae</taxon>
        <taxon>Shewanella</taxon>
    </lineage>
</organism>
<accession>A9L4U0</accession>
<feature type="chain" id="PRO_1000082777" description="UPF0246 protein Sbal195_1149">
    <location>
        <begin position="1"/>
        <end position="257"/>
    </location>
</feature>
<proteinExistence type="inferred from homology"/>
<evidence type="ECO:0000255" key="1">
    <source>
        <dbReference type="HAMAP-Rule" id="MF_00652"/>
    </source>
</evidence>
<protein>
    <recommendedName>
        <fullName evidence="1">UPF0246 protein Sbal195_1149</fullName>
    </recommendedName>
</protein>
<sequence length="257" mass="28846">MLILVSPAKTLDFEQPPLTQVYSQPDFLTHSQELIQVCRQLTPSDIATLMKVSDKIAGLNAARFGQWQPDFSLDNAKQAIFAFRGDVYTGFDADTLSEDEIAQTQSQLRILSGLYGLLRPLDLIMPYRLEMGTALSNPKGKNLYEFWGDTLTQAVNEALAESGSDIIVNLASNEYFKAIKPKKLQGQLISPVFKDCKNGQYKVISFFAKRARGMMARYIITNKVNTLAELRAFNLAGYYYSEEQSSPTNPTFLRAEQ</sequence>